<organism>
    <name type="scientific">Dictyostelium discoideum</name>
    <name type="common">Social amoeba</name>
    <dbReference type="NCBI Taxonomy" id="44689"/>
    <lineage>
        <taxon>Eukaryota</taxon>
        <taxon>Amoebozoa</taxon>
        <taxon>Evosea</taxon>
        <taxon>Eumycetozoa</taxon>
        <taxon>Dictyostelia</taxon>
        <taxon>Dictyosteliales</taxon>
        <taxon>Dictyosteliaceae</taxon>
        <taxon>Dictyostelium</taxon>
    </lineage>
</organism>
<comment type="subcellular location">
    <subcellularLocation>
        <location evidence="4">Secreted</location>
    </subcellularLocation>
</comment>
<comment type="similarity">
    <text evidence="4">Belongs to the countin family.</text>
</comment>
<accession>Q554K2</accession>
<accession>Q86AR7</accession>
<protein>
    <recommendedName>
        <fullName>Countin-like protein</fullName>
    </recommendedName>
</protein>
<name>CTNL_DICDI</name>
<sequence>MNKSLFSLILLIITIFNLASNINIVSAISNFNINNNNKNNNDNKEIRFPTDIIIDDSTEINFNNHEDNNNNNNNNNNNNNAYNEDSGNSVQLGDIECVVCLDFLDSYLPTLVKIISEYGVIESCSKICGLLNKTDEIDICTGLCDLVGVDTFWKIFVTNDINPFYACELITACSTPKNPAADFISLGVSPAIGQSGSKFLIDLTFQVVNTTGAGQFAFIVFYTQTQSKFINYQLFEGFSPGNYSVKYDFETTNNSTFINGQYPVTVYMCNGECGTMYSTLLNQTTSYFTISNPTPTPTPTPSNSTTPTPTPTNSTPTPTSTSTPTSTPTSTPTPTPTSSSSTKTHSSHYKNKINK</sequence>
<proteinExistence type="inferred from homology"/>
<feature type="signal peptide" evidence="1">
    <location>
        <begin position="1"/>
        <end position="27"/>
    </location>
</feature>
<feature type="chain" id="PRO_0000327911" description="Countin-like protein">
    <location>
        <begin position="28"/>
        <end position="355"/>
    </location>
</feature>
<feature type="domain" description="Saposin B-type" evidence="2">
    <location>
        <begin position="93"/>
        <end position="177"/>
    </location>
</feature>
<feature type="region of interest" description="Disordered" evidence="3">
    <location>
        <begin position="63"/>
        <end position="83"/>
    </location>
</feature>
<feature type="region of interest" description="Disordered" evidence="3">
    <location>
        <begin position="290"/>
        <end position="355"/>
    </location>
</feature>
<feature type="compositionally biased region" description="Low complexity" evidence="3">
    <location>
        <begin position="69"/>
        <end position="83"/>
    </location>
</feature>
<feature type="compositionally biased region" description="Low complexity" evidence="3">
    <location>
        <begin position="301"/>
        <end position="342"/>
    </location>
</feature>
<feature type="compositionally biased region" description="Basic residues" evidence="3">
    <location>
        <begin position="345"/>
        <end position="355"/>
    </location>
</feature>
<feature type="glycosylation site" description="N-linked (GlcNAc...) asparagine" evidence="2">
    <location>
        <position position="132"/>
    </location>
</feature>
<feature type="glycosylation site" description="N-linked (GlcNAc...) asparagine" evidence="2">
    <location>
        <position position="209"/>
    </location>
</feature>
<feature type="glycosylation site" description="N-linked (GlcNAc...) asparagine" evidence="2">
    <location>
        <position position="242"/>
    </location>
</feature>
<feature type="glycosylation site" description="N-linked (GlcNAc...) asparagine" evidence="2">
    <location>
        <position position="253"/>
    </location>
</feature>
<feature type="glycosylation site" description="N-linked (GlcNAc...) asparagine" evidence="2">
    <location>
        <position position="254"/>
    </location>
</feature>
<feature type="glycosylation site" description="N-linked (GlcNAc...) asparagine" evidence="2">
    <location>
        <position position="282"/>
    </location>
</feature>
<feature type="glycosylation site" description="N-linked (GlcNAc...) asparagine" evidence="2">
    <location>
        <position position="303"/>
    </location>
</feature>
<feature type="disulfide bond" evidence="2">
    <location>
        <begin position="97"/>
        <end position="173"/>
    </location>
</feature>
<feature type="disulfide bond" evidence="2">
    <location>
        <begin position="100"/>
        <end position="167"/>
    </location>
</feature>
<feature type="disulfide bond" evidence="2">
    <location>
        <begin position="128"/>
        <end position="140"/>
    </location>
</feature>
<reference key="1">
    <citation type="journal article" date="2002" name="Nature">
        <title>Sequence and analysis of chromosome 2 of Dictyostelium discoideum.</title>
        <authorList>
            <person name="Gloeckner G."/>
            <person name="Eichinger L."/>
            <person name="Szafranski K."/>
            <person name="Pachebat J.A."/>
            <person name="Bankier A.T."/>
            <person name="Dear P.H."/>
            <person name="Lehmann R."/>
            <person name="Baumgart C."/>
            <person name="Parra G."/>
            <person name="Abril J.F."/>
            <person name="Guigo R."/>
            <person name="Kumpf K."/>
            <person name="Tunggal B."/>
            <person name="Cox E.C."/>
            <person name="Quail M.A."/>
            <person name="Platzer M."/>
            <person name="Rosenthal A."/>
            <person name="Noegel A.A."/>
        </authorList>
    </citation>
    <scope>NUCLEOTIDE SEQUENCE [LARGE SCALE GENOMIC DNA]</scope>
    <source>
        <strain>AX4</strain>
    </source>
</reference>
<reference key="2">
    <citation type="journal article" date="2005" name="Nature">
        <title>The genome of the social amoeba Dictyostelium discoideum.</title>
        <authorList>
            <person name="Eichinger L."/>
            <person name="Pachebat J.A."/>
            <person name="Gloeckner G."/>
            <person name="Rajandream M.A."/>
            <person name="Sucgang R."/>
            <person name="Berriman M."/>
            <person name="Song J."/>
            <person name="Olsen R."/>
            <person name="Szafranski K."/>
            <person name="Xu Q."/>
            <person name="Tunggal B."/>
            <person name="Kummerfeld S."/>
            <person name="Madera M."/>
            <person name="Konfortov B.A."/>
            <person name="Rivero F."/>
            <person name="Bankier A.T."/>
            <person name="Lehmann R."/>
            <person name="Hamlin N."/>
            <person name="Davies R."/>
            <person name="Gaudet P."/>
            <person name="Fey P."/>
            <person name="Pilcher K."/>
            <person name="Chen G."/>
            <person name="Saunders D."/>
            <person name="Sodergren E.J."/>
            <person name="Davis P."/>
            <person name="Kerhornou A."/>
            <person name="Nie X."/>
            <person name="Hall N."/>
            <person name="Anjard C."/>
            <person name="Hemphill L."/>
            <person name="Bason N."/>
            <person name="Farbrother P."/>
            <person name="Desany B."/>
            <person name="Just E."/>
            <person name="Morio T."/>
            <person name="Rost R."/>
            <person name="Churcher C.M."/>
            <person name="Cooper J."/>
            <person name="Haydock S."/>
            <person name="van Driessche N."/>
            <person name="Cronin A."/>
            <person name="Goodhead I."/>
            <person name="Muzny D.M."/>
            <person name="Mourier T."/>
            <person name="Pain A."/>
            <person name="Lu M."/>
            <person name="Harper D."/>
            <person name="Lindsay R."/>
            <person name="Hauser H."/>
            <person name="James K.D."/>
            <person name="Quiles M."/>
            <person name="Madan Babu M."/>
            <person name="Saito T."/>
            <person name="Buchrieser C."/>
            <person name="Wardroper A."/>
            <person name="Felder M."/>
            <person name="Thangavelu M."/>
            <person name="Johnson D."/>
            <person name="Knights A."/>
            <person name="Loulseged H."/>
            <person name="Mungall K.L."/>
            <person name="Oliver K."/>
            <person name="Price C."/>
            <person name="Quail M.A."/>
            <person name="Urushihara H."/>
            <person name="Hernandez J."/>
            <person name="Rabbinowitsch E."/>
            <person name="Steffen D."/>
            <person name="Sanders M."/>
            <person name="Ma J."/>
            <person name="Kohara Y."/>
            <person name="Sharp S."/>
            <person name="Simmonds M.N."/>
            <person name="Spiegler S."/>
            <person name="Tivey A."/>
            <person name="Sugano S."/>
            <person name="White B."/>
            <person name="Walker D."/>
            <person name="Woodward J.R."/>
            <person name="Winckler T."/>
            <person name="Tanaka Y."/>
            <person name="Shaulsky G."/>
            <person name="Schleicher M."/>
            <person name="Weinstock G.M."/>
            <person name="Rosenthal A."/>
            <person name="Cox E.C."/>
            <person name="Chisholm R.L."/>
            <person name="Gibbs R.A."/>
            <person name="Loomis W.F."/>
            <person name="Platzer M."/>
            <person name="Kay R.R."/>
            <person name="Williams J.G."/>
            <person name="Dear P.H."/>
            <person name="Noegel A.A."/>
            <person name="Barrell B.G."/>
            <person name="Kuspa A."/>
        </authorList>
    </citation>
    <scope>NUCLEOTIDE SEQUENCE [LARGE SCALE GENOMIC DNA]</scope>
    <source>
        <strain>AX4</strain>
    </source>
</reference>
<evidence type="ECO:0000255" key="1"/>
<evidence type="ECO:0000255" key="2">
    <source>
        <dbReference type="PROSITE-ProRule" id="PRU00415"/>
    </source>
</evidence>
<evidence type="ECO:0000256" key="3">
    <source>
        <dbReference type="SAM" id="MobiDB-lite"/>
    </source>
</evidence>
<evidence type="ECO:0000305" key="4"/>
<dbReference type="EMBL" id="AAFI02000012">
    <property type="protein sequence ID" value="EAL70197.1"/>
    <property type="molecule type" value="Genomic_DNA"/>
</dbReference>
<dbReference type="RefSeq" id="XP_644321.1">
    <property type="nucleotide sequence ID" value="XM_639229.1"/>
</dbReference>
<dbReference type="FunCoup" id="Q554K2">
    <property type="interactions" value="362"/>
</dbReference>
<dbReference type="GlyGen" id="Q554K2">
    <property type="glycosylation" value="14 sites"/>
</dbReference>
<dbReference type="PaxDb" id="44689-DDB0305009"/>
<dbReference type="EnsemblProtists" id="EAL70197">
    <property type="protein sequence ID" value="EAL70197"/>
    <property type="gene ID" value="DDB_G0274609"/>
</dbReference>
<dbReference type="GeneID" id="8619749"/>
<dbReference type="KEGG" id="ddi:DDB_G0274609"/>
<dbReference type="dictyBase" id="DDB_G0274609"/>
<dbReference type="VEuPathDB" id="AmoebaDB:DDB_G0274609"/>
<dbReference type="eggNOG" id="ENOG502RCJS">
    <property type="taxonomic scope" value="Eukaryota"/>
</dbReference>
<dbReference type="HOGENOM" id="CLU_781732_0_0_1"/>
<dbReference type="InParanoid" id="Q554K2"/>
<dbReference type="OMA" id="CELITAC"/>
<dbReference type="PhylomeDB" id="Q554K2"/>
<dbReference type="PRO" id="PR:Q554K2"/>
<dbReference type="Proteomes" id="UP000002195">
    <property type="component" value="Chromosome 2"/>
</dbReference>
<dbReference type="GO" id="GO:0005576">
    <property type="term" value="C:extracellular region"/>
    <property type="evidence" value="ECO:0007669"/>
    <property type="project" value="UniProtKB-SubCell"/>
</dbReference>
<dbReference type="InterPro" id="IPR008139">
    <property type="entry name" value="SaposinB_dom"/>
</dbReference>
<dbReference type="PANTHER" id="PTHR16148:SF14">
    <property type="entry name" value="MYND-TYPE DOMAIN-CONTAINING PROTEIN"/>
    <property type="match status" value="1"/>
</dbReference>
<dbReference type="PANTHER" id="PTHR16148">
    <property type="entry name" value="NF-KAPPA-B-REPRESSING FACTOR-RELATED"/>
    <property type="match status" value="1"/>
</dbReference>
<dbReference type="PROSITE" id="PS50015">
    <property type="entry name" value="SAP_B"/>
    <property type="match status" value="1"/>
</dbReference>
<gene>
    <name type="ORF">DDB_G0274609</name>
</gene>
<keyword id="KW-1015">Disulfide bond</keyword>
<keyword id="KW-0325">Glycoprotein</keyword>
<keyword id="KW-1185">Reference proteome</keyword>
<keyword id="KW-0964">Secreted</keyword>
<keyword id="KW-0732">Signal</keyword>